<protein>
    <recommendedName>
        <fullName evidence="1">Phosphoglucosamine mutase</fullName>
        <ecNumber evidence="1">5.4.2.10</ecNumber>
    </recommendedName>
</protein>
<dbReference type="EC" id="5.4.2.10" evidence="1"/>
<dbReference type="EMBL" id="CP000377">
    <property type="protein sequence ID" value="ABF65037.1"/>
    <property type="molecule type" value="Genomic_DNA"/>
</dbReference>
<dbReference type="RefSeq" id="WP_011539625.1">
    <property type="nucleotide sequence ID" value="NC_008044.1"/>
</dbReference>
<dbReference type="SMR" id="Q1GE79"/>
<dbReference type="STRING" id="292414.TM1040_2305"/>
<dbReference type="KEGG" id="sit:TM1040_2305"/>
<dbReference type="eggNOG" id="COG1109">
    <property type="taxonomic scope" value="Bacteria"/>
</dbReference>
<dbReference type="HOGENOM" id="CLU_016950_7_0_5"/>
<dbReference type="OrthoDB" id="9803322at2"/>
<dbReference type="Proteomes" id="UP000000636">
    <property type="component" value="Chromosome"/>
</dbReference>
<dbReference type="GO" id="GO:0005829">
    <property type="term" value="C:cytosol"/>
    <property type="evidence" value="ECO:0007669"/>
    <property type="project" value="TreeGrafter"/>
</dbReference>
<dbReference type="GO" id="GO:0000287">
    <property type="term" value="F:magnesium ion binding"/>
    <property type="evidence" value="ECO:0007669"/>
    <property type="project" value="UniProtKB-UniRule"/>
</dbReference>
<dbReference type="GO" id="GO:0008966">
    <property type="term" value="F:phosphoglucosamine mutase activity"/>
    <property type="evidence" value="ECO:0007669"/>
    <property type="project" value="UniProtKB-UniRule"/>
</dbReference>
<dbReference type="GO" id="GO:0004615">
    <property type="term" value="F:phosphomannomutase activity"/>
    <property type="evidence" value="ECO:0007669"/>
    <property type="project" value="TreeGrafter"/>
</dbReference>
<dbReference type="GO" id="GO:0005975">
    <property type="term" value="P:carbohydrate metabolic process"/>
    <property type="evidence" value="ECO:0007669"/>
    <property type="project" value="InterPro"/>
</dbReference>
<dbReference type="GO" id="GO:0009252">
    <property type="term" value="P:peptidoglycan biosynthetic process"/>
    <property type="evidence" value="ECO:0007669"/>
    <property type="project" value="TreeGrafter"/>
</dbReference>
<dbReference type="GO" id="GO:0006048">
    <property type="term" value="P:UDP-N-acetylglucosamine biosynthetic process"/>
    <property type="evidence" value="ECO:0007669"/>
    <property type="project" value="TreeGrafter"/>
</dbReference>
<dbReference type="CDD" id="cd05802">
    <property type="entry name" value="GlmM"/>
    <property type="match status" value="1"/>
</dbReference>
<dbReference type="FunFam" id="3.30.310.50:FF:000001">
    <property type="entry name" value="Phosphoglucosamine mutase"/>
    <property type="match status" value="1"/>
</dbReference>
<dbReference type="FunFam" id="3.40.120.10:FF:000001">
    <property type="entry name" value="Phosphoglucosamine mutase"/>
    <property type="match status" value="1"/>
</dbReference>
<dbReference type="FunFam" id="3.40.120.10:FF:000002">
    <property type="entry name" value="Phosphoglucosamine mutase"/>
    <property type="match status" value="1"/>
</dbReference>
<dbReference type="Gene3D" id="3.40.120.10">
    <property type="entry name" value="Alpha-D-Glucose-1,6-Bisphosphate, subunit A, domain 3"/>
    <property type="match status" value="3"/>
</dbReference>
<dbReference type="Gene3D" id="3.30.310.50">
    <property type="entry name" value="Alpha-D-phosphohexomutase, C-terminal domain"/>
    <property type="match status" value="1"/>
</dbReference>
<dbReference type="HAMAP" id="MF_01554_B">
    <property type="entry name" value="GlmM_B"/>
    <property type="match status" value="1"/>
</dbReference>
<dbReference type="InterPro" id="IPR005844">
    <property type="entry name" value="A-D-PHexomutase_a/b/a-I"/>
</dbReference>
<dbReference type="InterPro" id="IPR016055">
    <property type="entry name" value="A-D-PHexomutase_a/b/a-I/II/III"/>
</dbReference>
<dbReference type="InterPro" id="IPR005845">
    <property type="entry name" value="A-D-PHexomutase_a/b/a-II"/>
</dbReference>
<dbReference type="InterPro" id="IPR005846">
    <property type="entry name" value="A-D-PHexomutase_a/b/a-III"/>
</dbReference>
<dbReference type="InterPro" id="IPR005843">
    <property type="entry name" value="A-D-PHexomutase_C"/>
</dbReference>
<dbReference type="InterPro" id="IPR036900">
    <property type="entry name" value="A-D-PHexomutase_C_sf"/>
</dbReference>
<dbReference type="InterPro" id="IPR016066">
    <property type="entry name" value="A-D-PHexomutase_CS"/>
</dbReference>
<dbReference type="InterPro" id="IPR005841">
    <property type="entry name" value="Alpha-D-phosphohexomutase_SF"/>
</dbReference>
<dbReference type="InterPro" id="IPR006352">
    <property type="entry name" value="GlmM_bact"/>
</dbReference>
<dbReference type="InterPro" id="IPR050060">
    <property type="entry name" value="Phosphoglucosamine_mutase"/>
</dbReference>
<dbReference type="NCBIfam" id="TIGR01455">
    <property type="entry name" value="glmM"/>
    <property type="match status" value="1"/>
</dbReference>
<dbReference type="NCBIfam" id="NF008139">
    <property type="entry name" value="PRK10887.1"/>
    <property type="match status" value="1"/>
</dbReference>
<dbReference type="PANTHER" id="PTHR42946:SF1">
    <property type="entry name" value="PHOSPHOGLUCOMUTASE (ALPHA-D-GLUCOSE-1,6-BISPHOSPHATE-DEPENDENT)"/>
    <property type="match status" value="1"/>
</dbReference>
<dbReference type="PANTHER" id="PTHR42946">
    <property type="entry name" value="PHOSPHOHEXOSE MUTASE"/>
    <property type="match status" value="1"/>
</dbReference>
<dbReference type="Pfam" id="PF02878">
    <property type="entry name" value="PGM_PMM_I"/>
    <property type="match status" value="1"/>
</dbReference>
<dbReference type="Pfam" id="PF02879">
    <property type="entry name" value="PGM_PMM_II"/>
    <property type="match status" value="1"/>
</dbReference>
<dbReference type="Pfam" id="PF02880">
    <property type="entry name" value="PGM_PMM_III"/>
    <property type="match status" value="1"/>
</dbReference>
<dbReference type="Pfam" id="PF00408">
    <property type="entry name" value="PGM_PMM_IV"/>
    <property type="match status" value="1"/>
</dbReference>
<dbReference type="PRINTS" id="PR00509">
    <property type="entry name" value="PGMPMM"/>
</dbReference>
<dbReference type="SUPFAM" id="SSF55957">
    <property type="entry name" value="Phosphoglucomutase, C-terminal domain"/>
    <property type="match status" value="1"/>
</dbReference>
<dbReference type="SUPFAM" id="SSF53738">
    <property type="entry name" value="Phosphoglucomutase, first 3 domains"/>
    <property type="match status" value="3"/>
</dbReference>
<dbReference type="PROSITE" id="PS00710">
    <property type="entry name" value="PGM_PMM"/>
    <property type="match status" value="1"/>
</dbReference>
<gene>
    <name evidence="1" type="primary">glmM</name>
    <name type="ordered locus">TM1040_2305</name>
</gene>
<organism>
    <name type="scientific">Ruegeria sp. (strain TM1040)</name>
    <name type="common">Silicibacter sp.</name>
    <dbReference type="NCBI Taxonomy" id="292414"/>
    <lineage>
        <taxon>Bacteria</taxon>
        <taxon>Pseudomonadati</taxon>
        <taxon>Pseudomonadota</taxon>
        <taxon>Alphaproteobacteria</taxon>
        <taxon>Rhodobacterales</taxon>
        <taxon>Roseobacteraceae</taxon>
        <taxon>Ruegeria</taxon>
    </lineage>
</organism>
<accession>Q1GE79</accession>
<reference key="1">
    <citation type="submission" date="2006-05" db="EMBL/GenBank/DDBJ databases">
        <title>Complete sequence of chromosome of Silicibacter sp. TM1040.</title>
        <authorList>
            <consortium name="US DOE Joint Genome Institute"/>
            <person name="Copeland A."/>
            <person name="Lucas S."/>
            <person name="Lapidus A."/>
            <person name="Barry K."/>
            <person name="Detter J.C."/>
            <person name="Glavina del Rio T."/>
            <person name="Hammon N."/>
            <person name="Israni S."/>
            <person name="Dalin E."/>
            <person name="Tice H."/>
            <person name="Pitluck S."/>
            <person name="Brettin T."/>
            <person name="Bruce D."/>
            <person name="Han C."/>
            <person name="Tapia R."/>
            <person name="Goodwin L."/>
            <person name="Thompson L.S."/>
            <person name="Gilna P."/>
            <person name="Schmutz J."/>
            <person name="Larimer F."/>
            <person name="Land M."/>
            <person name="Hauser L."/>
            <person name="Kyrpides N."/>
            <person name="Kim E."/>
            <person name="Belas R."/>
            <person name="Moran M.A."/>
            <person name="Buchan A."/>
            <person name="Gonzalez J.M."/>
            <person name="Schell M.A."/>
            <person name="Sun F."/>
            <person name="Richardson P."/>
        </authorList>
    </citation>
    <scope>NUCLEOTIDE SEQUENCE [LARGE SCALE GENOMIC DNA]</scope>
    <source>
        <strain>TM1040</strain>
    </source>
</reference>
<evidence type="ECO:0000255" key="1">
    <source>
        <dbReference type="HAMAP-Rule" id="MF_01554"/>
    </source>
</evidence>
<proteinExistence type="inferred from homology"/>
<comment type="function">
    <text evidence="1">Catalyzes the conversion of glucosamine-6-phosphate to glucosamine-1-phosphate.</text>
</comment>
<comment type="catalytic activity">
    <reaction evidence="1">
        <text>alpha-D-glucosamine 1-phosphate = D-glucosamine 6-phosphate</text>
        <dbReference type="Rhea" id="RHEA:23424"/>
        <dbReference type="ChEBI" id="CHEBI:58516"/>
        <dbReference type="ChEBI" id="CHEBI:58725"/>
        <dbReference type="EC" id="5.4.2.10"/>
    </reaction>
</comment>
<comment type="cofactor">
    <cofactor evidence="1">
        <name>Mg(2+)</name>
        <dbReference type="ChEBI" id="CHEBI:18420"/>
    </cofactor>
    <text evidence="1">Binds 1 Mg(2+) ion per subunit.</text>
</comment>
<comment type="PTM">
    <text evidence="1">Activated by phosphorylation.</text>
</comment>
<comment type="similarity">
    <text evidence="1">Belongs to the phosphohexose mutase family.</text>
</comment>
<name>GLMM_RUEST</name>
<sequence>MRKLFGTDGVRGKANMHPMTAEMALRIGAAVGRYFRRENDTVHRVVIGKDTRLSGYMFENALTAGLTSTGMNVLLLGPVPTPAVGLMTRSMRADLGVMISASHNPAEDNGIKFFGPDGYKLSDEVELELEALIEAGVEPAQAQNIGRAKRIDDARFRYGERVKSSLPRDMRLDGLKVVIDCANGAAHRAAPEILWELGADVIPVGVSPDGLNINRGCGSTQPAAAAETVVAHGADVGICLDGDADRVVVIDETGTVADGDQLMALLASAWSADGRLSGGALVATVMSNLGLERFLNERGIGLERTGVGDRYVVERMRQGGFNLGGEQSGHIVMSDYATTGDGLMAGLHFLAEMVRRGQKASELARQFEPVPQLLKNVRFEAGQAPLEADQVQTAIAEAEKQLNGRGRLLIRKSGTEPLIRVMAESEDPVLLNRAVDDVVAAVEAATQ</sequence>
<keyword id="KW-0413">Isomerase</keyword>
<keyword id="KW-0460">Magnesium</keyword>
<keyword id="KW-0479">Metal-binding</keyword>
<keyword id="KW-0597">Phosphoprotein</keyword>
<keyword id="KW-1185">Reference proteome</keyword>
<feature type="chain" id="PRO_0000301382" description="Phosphoglucosamine mutase">
    <location>
        <begin position="1"/>
        <end position="447"/>
    </location>
</feature>
<feature type="active site" description="Phosphoserine intermediate" evidence="1">
    <location>
        <position position="102"/>
    </location>
</feature>
<feature type="binding site" description="via phosphate group" evidence="1">
    <location>
        <position position="102"/>
    </location>
    <ligand>
        <name>Mg(2+)</name>
        <dbReference type="ChEBI" id="CHEBI:18420"/>
    </ligand>
</feature>
<feature type="binding site" evidence="1">
    <location>
        <position position="241"/>
    </location>
    <ligand>
        <name>Mg(2+)</name>
        <dbReference type="ChEBI" id="CHEBI:18420"/>
    </ligand>
</feature>
<feature type="binding site" evidence="1">
    <location>
        <position position="243"/>
    </location>
    <ligand>
        <name>Mg(2+)</name>
        <dbReference type="ChEBI" id="CHEBI:18420"/>
    </ligand>
</feature>
<feature type="binding site" evidence="1">
    <location>
        <position position="245"/>
    </location>
    <ligand>
        <name>Mg(2+)</name>
        <dbReference type="ChEBI" id="CHEBI:18420"/>
    </ligand>
</feature>
<feature type="modified residue" description="Phosphoserine" evidence="1">
    <location>
        <position position="102"/>
    </location>
</feature>